<sequence length="230" mass="24318">MSEIKDIVVQGLWKNNSALVQLLGLCPLLAVTSTATNALGLGLATTLVLTLTNLTVSALRRWTPAEIRIPIYVMIIASVVSAVQMLINAYAFGLYQSLGIFIPLIVTNCIVVGRAEAFAAKKGPWLSALDGFSIGMGATGAMFVLGSLREILGNGTLFDGADSLLGGWAKVLRVEIFHTDSPFLLAMLPPGAFIGLGLMLAVKYLIDEKMKKRRAETAPSAVPAGETGKV</sequence>
<proteinExistence type="inferred from homology"/>
<dbReference type="EC" id="7.-.-.-" evidence="1"/>
<dbReference type="EMBL" id="AE017220">
    <property type="protein sequence ID" value="AAX65378.1"/>
    <property type="molecule type" value="Genomic_DNA"/>
</dbReference>
<dbReference type="RefSeq" id="WP_001289628.1">
    <property type="nucleotide sequence ID" value="NC_006905.1"/>
</dbReference>
<dbReference type="SMR" id="Q57PI3"/>
<dbReference type="KEGG" id="sec:SCH_1472"/>
<dbReference type="HOGENOM" id="CLU_046659_1_0_6"/>
<dbReference type="Proteomes" id="UP000000538">
    <property type="component" value="Chromosome"/>
</dbReference>
<dbReference type="GO" id="GO:0005886">
    <property type="term" value="C:plasma membrane"/>
    <property type="evidence" value="ECO:0007669"/>
    <property type="project" value="UniProtKB-SubCell"/>
</dbReference>
<dbReference type="GO" id="GO:0022900">
    <property type="term" value="P:electron transport chain"/>
    <property type="evidence" value="ECO:0007669"/>
    <property type="project" value="UniProtKB-UniRule"/>
</dbReference>
<dbReference type="HAMAP" id="MF_00478">
    <property type="entry name" value="RsxE_RnfE"/>
    <property type="match status" value="1"/>
</dbReference>
<dbReference type="InterPro" id="IPR003667">
    <property type="entry name" value="NqrDE/RnfAE"/>
</dbReference>
<dbReference type="InterPro" id="IPR010968">
    <property type="entry name" value="RnfE"/>
</dbReference>
<dbReference type="NCBIfam" id="NF009070">
    <property type="entry name" value="PRK12405.1"/>
    <property type="match status" value="1"/>
</dbReference>
<dbReference type="NCBIfam" id="TIGR01948">
    <property type="entry name" value="rnfE"/>
    <property type="match status" value="1"/>
</dbReference>
<dbReference type="PANTHER" id="PTHR30586">
    <property type="entry name" value="ELECTRON TRANSPORT COMPLEX PROTEIN RNFE"/>
    <property type="match status" value="1"/>
</dbReference>
<dbReference type="PANTHER" id="PTHR30586:SF0">
    <property type="entry name" value="ION-TRANSLOCATING OXIDOREDUCTASE COMPLEX SUBUNIT E"/>
    <property type="match status" value="1"/>
</dbReference>
<dbReference type="Pfam" id="PF02508">
    <property type="entry name" value="Rnf-Nqr"/>
    <property type="match status" value="1"/>
</dbReference>
<dbReference type="PIRSF" id="PIRSF006102">
    <property type="entry name" value="NQR_DE"/>
    <property type="match status" value="1"/>
</dbReference>
<gene>
    <name evidence="1" type="primary">rsxE</name>
    <name type="ordered locus">SCH_1472</name>
</gene>
<keyword id="KW-0997">Cell inner membrane</keyword>
<keyword id="KW-1003">Cell membrane</keyword>
<keyword id="KW-0249">Electron transport</keyword>
<keyword id="KW-0472">Membrane</keyword>
<keyword id="KW-1278">Translocase</keyword>
<keyword id="KW-0812">Transmembrane</keyword>
<keyword id="KW-1133">Transmembrane helix</keyword>
<keyword id="KW-0813">Transport</keyword>
<reference key="1">
    <citation type="journal article" date="2005" name="Nucleic Acids Res.">
        <title>The genome sequence of Salmonella enterica serovar Choleraesuis, a highly invasive and resistant zoonotic pathogen.</title>
        <authorList>
            <person name="Chiu C.-H."/>
            <person name="Tang P."/>
            <person name="Chu C."/>
            <person name="Hu S."/>
            <person name="Bao Q."/>
            <person name="Yu J."/>
            <person name="Chou Y.-Y."/>
            <person name="Wang H.-S."/>
            <person name="Lee Y.-S."/>
        </authorList>
    </citation>
    <scope>NUCLEOTIDE SEQUENCE [LARGE SCALE GENOMIC DNA]</scope>
    <source>
        <strain>SC-B67</strain>
    </source>
</reference>
<organism>
    <name type="scientific">Salmonella choleraesuis (strain SC-B67)</name>
    <dbReference type="NCBI Taxonomy" id="321314"/>
    <lineage>
        <taxon>Bacteria</taxon>
        <taxon>Pseudomonadati</taxon>
        <taxon>Pseudomonadota</taxon>
        <taxon>Gammaproteobacteria</taxon>
        <taxon>Enterobacterales</taxon>
        <taxon>Enterobacteriaceae</taxon>
        <taxon>Salmonella</taxon>
    </lineage>
</organism>
<evidence type="ECO:0000255" key="1">
    <source>
        <dbReference type="HAMAP-Rule" id="MF_00478"/>
    </source>
</evidence>
<protein>
    <recommendedName>
        <fullName evidence="1">Ion-translocating oxidoreductase complex subunit E</fullName>
        <ecNumber evidence="1">7.-.-.-</ecNumber>
    </recommendedName>
    <alternativeName>
        <fullName evidence="1">Rsx electron transport complex subunit E</fullName>
    </alternativeName>
</protein>
<feature type="chain" id="PRO_0000214277" description="Ion-translocating oxidoreductase complex subunit E">
    <location>
        <begin position="1"/>
        <end position="230"/>
    </location>
</feature>
<feature type="transmembrane region" description="Helical" evidence="1">
    <location>
        <begin position="18"/>
        <end position="38"/>
    </location>
</feature>
<feature type="transmembrane region" description="Helical" evidence="1">
    <location>
        <begin position="39"/>
        <end position="59"/>
    </location>
</feature>
<feature type="transmembrane region" description="Helical" evidence="1">
    <location>
        <begin position="63"/>
        <end position="83"/>
    </location>
</feature>
<feature type="transmembrane region" description="Helical" evidence="1">
    <location>
        <begin position="86"/>
        <end position="106"/>
    </location>
</feature>
<feature type="transmembrane region" description="Helical" evidence="1">
    <location>
        <begin position="125"/>
        <end position="145"/>
    </location>
</feature>
<feature type="transmembrane region" description="Helical" evidence="1">
    <location>
        <begin position="182"/>
        <end position="202"/>
    </location>
</feature>
<accession>Q57PI3</accession>
<name>RSXE_SALCH</name>
<comment type="function">
    <text evidence="1">Part of a membrane-bound complex that couples electron transfer with translocation of ions across the membrane. Required to maintain the reduced state of SoxR.</text>
</comment>
<comment type="subunit">
    <text evidence="1">The complex is composed of six subunits: RsxA, RsxB, RsxC, RsxD, RsxE and RsxG.</text>
</comment>
<comment type="subcellular location">
    <subcellularLocation>
        <location evidence="1">Cell inner membrane</location>
        <topology evidence="1">Multi-pass membrane protein</topology>
    </subcellularLocation>
</comment>
<comment type="similarity">
    <text evidence="1">Belongs to the NqrDE/RnfAE family.</text>
</comment>